<feature type="chain" id="PRO_0000286494" description="Signal recognition particle receptor FtsY">
    <location>
        <begin position="1"/>
        <end position="303"/>
    </location>
</feature>
<feature type="binding site" evidence="1">
    <location>
        <begin position="108"/>
        <end position="115"/>
    </location>
    <ligand>
        <name>GTP</name>
        <dbReference type="ChEBI" id="CHEBI:37565"/>
    </ligand>
</feature>
<feature type="binding site" evidence="1">
    <location>
        <begin position="190"/>
        <end position="194"/>
    </location>
    <ligand>
        <name>GTP</name>
        <dbReference type="ChEBI" id="CHEBI:37565"/>
    </ligand>
</feature>
<feature type="binding site" evidence="1">
    <location>
        <begin position="254"/>
        <end position="257"/>
    </location>
    <ligand>
        <name>GTP</name>
        <dbReference type="ChEBI" id="CHEBI:37565"/>
    </ligand>
</feature>
<dbReference type="EC" id="3.6.5.4" evidence="1"/>
<dbReference type="EMBL" id="CP000087">
    <property type="protein sequence ID" value="ABE04109.1"/>
    <property type="molecule type" value="Genomic_DNA"/>
</dbReference>
<dbReference type="RefSeq" id="WP_011476724.1">
    <property type="nucleotide sequence ID" value="NC_007940.1"/>
</dbReference>
<dbReference type="SMR" id="Q1RKK5"/>
<dbReference type="KEGG" id="rbe:RBE_0028"/>
<dbReference type="eggNOG" id="COG0552">
    <property type="taxonomic scope" value="Bacteria"/>
</dbReference>
<dbReference type="HOGENOM" id="CLU_009301_3_0_5"/>
<dbReference type="OrthoDB" id="9804720at2"/>
<dbReference type="Proteomes" id="UP000001951">
    <property type="component" value="Chromosome"/>
</dbReference>
<dbReference type="GO" id="GO:0005737">
    <property type="term" value="C:cytoplasm"/>
    <property type="evidence" value="ECO:0007669"/>
    <property type="project" value="UniProtKB-SubCell"/>
</dbReference>
<dbReference type="GO" id="GO:0005886">
    <property type="term" value="C:plasma membrane"/>
    <property type="evidence" value="ECO:0007669"/>
    <property type="project" value="UniProtKB-SubCell"/>
</dbReference>
<dbReference type="GO" id="GO:0016887">
    <property type="term" value="F:ATP hydrolysis activity"/>
    <property type="evidence" value="ECO:0007669"/>
    <property type="project" value="InterPro"/>
</dbReference>
<dbReference type="GO" id="GO:0005525">
    <property type="term" value="F:GTP binding"/>
    <property type="evidence" value="ECO:0007669"/>
    <property type="project" value="UniProtKB-UniRule"/>
</dbReference>
<dbReference type="GO" id="GO:0003924">
    <property type="term" value="F:GTPase activity"/>
    <property type="evidence" value="ECO:0007669"/>
    <property type="project" value="UniProtKB-UniRule"/>
</dbReference>
<dbReference type="GO" id="GO:0005047">
    <property type="term" value="F:signal recognition particle binding"/>
    <property type="evidence" value="ECO:0007669"/>
    <property type="project" value="TreeGrafter"/>
</dbReference>
<dbReference type="GO" id="GO:0006614">
    <property type="term" value="P:SRP-dependent cotranslational protein targeting to membrane"/>
    <property type="evidence" value="ECO:0007669"/>
    <property type="project" value="InterPro"/>
</dbReference>
<dbReference type="CDD" id="cd17874">
    <property type="entry name" value="FtsY"/>
    <property type="match status" value="1"/>
</dbReference>
<dbReference type="FunFam" id="3.40.50.300:FF:000053">
    <property type="entry name" value="Signal recognition particle receptor FtsY"/>
    <property type="match status" value="1"/>
</dbReference>
<dbReference type="Gene3D" id="3.40.50.300">
    <property type="entry name" value="P-loop containing nucleotide triphosphate hydrolases"/>
    <property type="match status" value="1"/>
</dbReference>
<dbReference type="Gene3D" id="1.20.120.140">
    <property type="entry name" value="Signal recognition particle SRP54, nucleotide-binding domain"/>
    <property type="match status" value="1"/>
</dbReference>
<dbReference type="HAMAP" id="MF_00920">
    <property type="entry name" value="FtsY"/>
    <property type="match status" value="1"/>
</dbReference>
<dbReference type="InterPro" id="IPR003593">
    <property type="entry name" value="AAA+_ATPase"/>
</dbReference>
<dbReference type="InterPro" id="IPR027417">
    <property type="entry name" value="P-loop_NTPase"/>
</dbReference>
<dbReference type="InterPro" id="IPR013822">
    <property type="entry name" value="Signal_recog_particl_SRP54_hlx"/>
</dbReference>
<dbReference type="InterPro" id="IPR004390">
    <property type="entry name" value="SR_rcpt_FtsY"/>
</dbReference>
<dbReference type="InterPro" id="IPR036225">
    <property type="entry name" value="SRP/SRP_N"/>
</dbReference>
<dbReference type="InterPro" id="IPR000897">
    <property type="entry name" value="SRP54_GTPase_dom"/>
</dbReference>
<dbReference type="InterPro" id="IPR042101">
    <property type="entry name" value="SRP54_N_sf"/>
</dbReference>
<dbReference type="NCBIfam" id="TIGR00064">
    <property type="entry name" value="ftsY"/>
    <property type="match status" value="1"/>
</dbReference>
<dbReference type="PANTHER" id="PTHR43134">
    <property type="entry name" value="SIGNAL RECOGNITION PARTICLE RECEPTOR SUBUNIT ALPHA"/>
    <property type="match status" value="1"/>
</dbReference>
<dbReference type="PANTHER" id="PTHR43134:SF1">
    <property type="entry name" value="SIGNAL RECOGNITION PARTICLE RECEPTOR SUBUNIT ALPHA"/>
    <property type="match status" value="1"/>
</dbReference>
<dbReference type="Pfam" id="PF00448">
    <property type="entry name" value="SRP54"/>
    <property type="match status" value="1"/>
</dbReference>
<dbReference type="Pfam" id="PF02881">
    <property type="entry name" value="SRP54_N"/>
    <property type="match status" value="1"/>
</dbReference>
<dbReference type="SMART" id="SM00382">
    <property type="entry name" value="AAA"/>
    <property type="match status" value="1"/>
</dbReference>
<dbReference type="SMART" id="SM00962">
    <property type="entry name" value="SRP54"/>
    <property type="match status" value="1"/>
</dbReference>
<dbReference type="SMART" id="SM00963">
    <property type="entry name" value="SRP54_N"/>
    <property type="match status" value="1"/>
</dbReference>
<dbReference type="SUPFAM" id="SSF47364">
    <property type="entry name" value="Domain of the SRP/SRP receptor G-proteins"/>
    <property type="match status" value="1"/>
</dbReference>
<dbReference type="SUPFAM" id="SSF52540">
    <property type="entry name" value="P-loop containing nucleoside triphosphate hydrolases"/>
    <property type="match status" value="1"/>
</dbReference>
<dbReference type="PROSITE" id="PS00300">
    <property type="entry name" value="SRP54"/>
    <property type="match status" value="1"/>
</dbReference>
<proteinExistence type="inferred from homology"/>
<keyword id="KW-0997">Cell inner membrane</keyword>
<keyword id="KW-1003">Cell membrane</keyword>
<keyword id="KW-0963">Cytoplasm</keyword>
<keyword id="KW-0342">GTP-binding</keyword>
<keyword id="KW-0378">Hydrolase</keyword>
<keyword id="KW-0472">Membrane</keyword>
<keyword id="KW-0547">Nucleotide-binding</keyword>
<keyword id="KW-0675">Receptor</keyword>
<protein>
    <recommendedName>
        <fullName evidence="1">Signal recognition particle receptor FtsY</fullName>
        <shortName evidence="1">SRP receptor</shortName>
        <ecNumber evidence="1">3.6.5.4</ecNumber>
    </recommendedName>
</protein>
<comment type="function">
    <text evidence="1">Involved in targeting and insertion of nascent membrane proteins into the cytoplasmic membrane. Acts as a receptor for the complex formed by the signal recognition particle (SRP) and the ribosome-nascent chain (RNC). Interaction with SRP-RNC leads to the transfer of the RNC complex to the Sec translocase for insertion into the membrane, the hydrolysis of GTP by both Ffh and FtsY, and the dissociation of the SRP-FtsY complex into the individual components.</text>
</comment>
<comment type="catalytic activity">
    <reaction evidence="1">
        <text>GTP + H2O = GDP + phosphate + H(+)</text>
        <dbReference type="Rhea" id="RHEA:19669"/>
        <dbReference type="ChEBI" id="CHEBI:15377"/>
        <dbReference type="ChEBI" id="CHEBI:15378"/>
        <dbReference type="ChEBI" id="CHEBI:37565"/>
        <dbReference type="ChEBI" id="CHEBI:43474"/>
        <dbReference type="ChEBI" id="CHEBI:58189"/>
        <dbReference type="EC" id="3.6.5.4"/>
    </reaction>
</comment>
<comment type="subunit">
    <text evidence="1">Part of the signal recognition particle protein translocation system, which is composed of SRP and FtsY. SRP is a ribonucleoprotein composed of Ffh and a 4.5S RNA molecule.</text>
</comment>
<comment type="subcellular location">
    <subcellularLocation>
        <location>Cell inner membrane</location>
        <topology>Peripheral membrane protein</topology>
        <orientation>Cytoplasmic side</orientation>
    </subcellularLocation>
    <subcellularLocation>
        <location evidence="1">Cytoplasm</location>
    </subcellularLocation>
</comment>
<comment type="similarity">
    <text evidence="1">Belongs to the GTP-binding SRP family. FtsY subfamily.</text>
</comment>
<name>FTSY_RICBR</name>
<sequence length="303" mass="33173">MISIFSKLKQGLSKTSGKISAGIDKIFYKKKLDAETLEELEELLISTDMGSLVAAKIIEDFKSLKFDKEVETTEIKETLANLIEQQLLESEIPFTLNENKLNVVLVCGVNGAGKTTTIGKLAAMYGMQGKKVAVAACDTFRAAAVNQLDSWVTRAKALLITGEEAADPASVAYRAVEESIKQDIDILFIDTAGRLHNKKNLMDELTKIVKVIKKVDENLPTHSVLVIDAITGQNTYNQVEHFNDATNLTGLIVTKLDGSAKAGVIVGVVQRFNLPIYFIGIGEQIEDLKIFNRHDFAKSLVGL</sequence>
<evidence type="ECO:0000255" key="1">
    <source>
        <dbReference type="HAMAP-Rule" id="MF_00920"/>
    </source>
</evidence>
<reference key="1">
    <citation type="journal article" date="2006" name="PLoS Genet.">
        <title>Genome sequence of Rickettsia bellii illuminates the role of amoebae in gene exchanges between intracellular pathogens.</title>
        <authorList>
            <person name="Ogata H."/>
            <person name="La Scola B."/>
            <person name="Audic S."/>
            <person name="Renesto P."/>
            <person name="Blanc G."/>
            <person name="Robert C."/>
            <person name="Fournier P.-E."/>
            <person name="Claverie J.-M."/>
            <person name="Raoult D."/>
        </authorList>
    </citation>
    <scope>NUCLEOTIDE SEQUENCE [LARGE SCALE GENOMIC DNA]</scope>
    <source>
        <strain>RML369-C</strain>
    </source>
</reference>
<organism>
    <name type="scientific">Rickettsia bellii (strain RML369-C)</name>
    <dbReference type="NCBI Taxonomy" id="336407"/>
    <lineage>
        <taxon>Bacteria</taxon>
        <taxon>Pseudomonadati</taxon>
        <taxon>Pseudomonadota</taxon>
        <taxon>Alphaproteobacteria</taxon>
        <taxon>Rickettsiales</taxon>
        <taxon>Rickettsiaceae</taxon>
        <taxon>Rickettsieae</taxon>
        <taxon>Rickettsia</taxon>
        <taxon>belli group</taxon>
    </lineage>
</organism>
<gene>
    <name evidence="1" type="primary">ftsY</name>
    <name type="ordered locus">RBE_0028</name>
</gene>
<accession>Q1RKK5</accession>